<proteinExistence type="inferred from homology"/>
<dbReference type="EC" id="3.1.11.6" evidence="1"/>
<dbReference type="EMBL" id="BX571857">
    <property type="protein sequence ID" value="CAG43252.1"/>
    <property type="molecule type" value="Genomic_DNA"/>
</dbReference>
<dbReference type="RefSeq" id="WP_001286928.1">
    <property type="nucleotide sequence ID" value="NC_002953.3"/>
</dbReference>
<dbReference type="SMR" id="Q6G942"/>
<dbReference type="KEGG" id="sas:SAS1462"/>
<dbReference type="HOGENOM" id="CLU_023625_3_1_9"/>
<dbReference type="GO" id="GO:0005737">
    <property type="term" value="C:cytoplasm"/>
    <property type="evidence" value="ECO:0007669"/>
    <property type="project" value="UniProtKB-SubCell"/>
</dbReference>
<dbReference type="GO" id="GO:0009318">
    <property type="term" value="C:exodeoxyribonuclease VII complex"/>
    <property type="evidence" value="ECO:0007669"/>
    <property type="project" value="InterPro"/>
</dbReference>
<dbReference type="GO" id="GO:0008855">
    <property type="term" value="F:exodeoxyribonuclease VII activity"/>
    <property type="evidence" value="ECO:0007669"/>
    <property type="project" value="UniProtKB-UniRule"/>
</dbReference>
<dbReference type="GO" id="GO:0003676">
    <property type="term" value="F:nucleic acid binding"/>
    <property type="evidence" value="ECO:0007669"/>
    <property type="project" value="InterPro"/>
</dbReference>
<dbReference type="GO" id="GO:0006308">
    <property type="term" value="P:DNA catabolic process"/>
    <property type="evidence" value="ECO:0007669"/>
    <property type="project" value="UniProtKB-UniRule"/>
</dbReference>
<dbReference type="CDD" id="cd04489">
    <property type="entry name" value="ExoVII_LU_OBF"/>
    <property type="match status" value="1"/>
</dbReference>
<dbReference type="HAMAP" id="MF_00378">
    <property type="entry name" value="Exonuc_7_L"/>
    <property type="match status" value="1"/>
</dbReference>
<dbReference type="InterPro" id="IPR003753">
    <property type="entry name" value="Exonuc_VII_L"/>
</dbReference>
<dbReference type="InterPro" id="IPR020579">
    <property type="entry name" value="Exonuc_VII_lsu_C"/>
</dbReference>
<dbReference type="InterPro" id="IPR025824">
    <property type="entry name" value="OB-fold_nuc-bd_dom"/>
</dbReference>
<dbReference type="NCBIfam" id="TIGR00237">
    <property type="entry name" value="xseA"/>
    <property type="match status" value="1"/>
</dbReference>
<dbReference type="PANTHER" id="PTHR30008">
    <property type="entry name" value="EXODEOXYRIBONUCLEASE 7 LARGE SUBUNIT"/>
    <property type="match status" value="1"/>
</dbReference>
<dbReference type="PANTHER" id="PTHR30008:SF0">
    <property type="entry name" value="EXODEOXYRIBONUCLEASE 7 LARGE SUBUNIT"/>
    <property type="match status" value="1"/>
</dbReference>
<dbReference type="Pfam" id="PF02601">
    <property type="entry name" value="Exonuc_VII_L"/>
    <property type="match status" value="1"/>
</dbReference>
<dbReference type="Pfam" id="PF13742">
    <property type="entry name" value="tRNA_anti_2"/>
    <property type="match status" value="1"/>
</dbReference>
<organism>
    <name type="scientific">Staphylococcus aureus (strain MSSA476)</name>
    <dbReference type="NCBI Taxonomy" id="282459"/>
    <lineage>
        <taxon>Bacteria</taxon>
        <taxon>Bacillati</taxon>
        <taxon>Bacillota</taxon>
        <taxon>Bacilli</taxon>
        <taxon>Bacillales</taxon>
        <taxon>Staphylococcaceae</taxon>
        <taxon>Staphylococcus</taxon>
    </lineage>
</organism>
<gene>
    <name evidence="1" type="primary">xseA</name>
    <name type="ordered locus">SAS1462</name>
</gene>
<evidence type="ECO:0000255" key="1">
    <source>
        <dbReference type="HAMAP-Rule" id="MF_00378"/>
    </source>
</evidence>
<feature type="chain" id="PRO_0000197881" description="Exodeoxyribonuclease 7 large subunit">
    <location>
        <begin position="1"/>
        <end position="445"/>
    </location>
</feature>
<reference key="1">
    <citation type="journal article" date="2004" name="Proc. Natl. Acad. Sci. U.S.A.">
        <title>Complete genomes of two clinical Staphylococcus aureus strains: evidence for the rapid evolution of virulence and drug resistance.</title>
        <authorList>
            <person name="Holden M.T.G."/>
            <person name="Feil E.J."/>
            <person name="Lindsay J.A."/>
            <person name="Peacock S.J."/>
            <person name="Day N.P.J."/>
            <person name="Enright M.C."/>
            <person name="Foster T.J."/>
            <person name="Moore C.E."/>
            <person name="Hurst L."/>
            <person name="Atkin R."/>
            <person name="Barron A."/>
            <person name="Bason N."/>
            <person name="Bentley S.D."/>
            <person name="Chillingworth C."/>
            <person name="Chillingworth T."/>
            <person name="Churcher C."/>
            <person name="Clark L."/>
            <person name="Corton C."/>
            <person name="Cronin A."/>
            <person name="Doggett J."/>
            <person name="Dowd L."/>
            <person name="Feltwell T."/>
            <person name="Hance Z."/>
            <person name="Harris B."/>
            <person name="Hauser H."/>
            <person name="Holroyd S."/>
            <person name="Jagels K."/>
            <person name="James K.D."/>
            <person name="Lennard N."/>
            <person name="Line A."/>
            <person name="Mayes R."/>
            <person name="Moule S."/>
            <person name="Mungall K."/>
            <person name="Ormond D."/>
            <person name="Quail M.A."/>
            <person name="Rabbinowitsch E."/>
            <person name="Rutherford K.M."/>
            <person name="Sanders M."/>
            <person name="Sharp S."/>
            <person name="Simmonds M."/>
            <person name="Stevens K."/>
            <person name="Whitehead S."/>
            <person name="Barrell B.G."/>
            <person name="Spratt B.G."/>
            <person name="Parkhill J."/>
        </authorList>
    </citation>
    <scope>NUCLEOTIDE SEQUENCE [LARGE SCALE GENOMIC DNA]</scope>
    <source>
        <strain>MSSA476</strain>
    </source>
</reference>
<comment type="function">
    <text evidence="1">Bidirectionally degrades single-stranded DNA into large acid-insoluble oligonucleotides, which are then degraded further into small acid-soluble oligonucleotides.</text>
</comment>
<comment type="catalytic activity">
    <reaction evidence="1">
        <text>Exonucleolytic cleavage in either 5'- to 3'- or 3'- to 5'-direction to yield nucleoside 5'-phosphates.</text>
        <dbReference type="EC" id="3.1.11.6"/>
    </reaction>
</comment>
<comment type="subunit">
    <text evidence="1">Heterooligomer composed of large and small subunits.</text>
</comment>
<comment type="subcellular location">
    <subcellularLocation>
        <location evidence="1">Cytoplasm</location>
    </subcellularLocation>
</comment>
<comment type="similarity">
    <text evidence="1">Belongs to the XseA family.</text>
</comment>
<name>EX7L_STAAS</name>
<protein>
    <recommendedName>
        <fullName evidence="1">Exodeoxyribonuclease 7 large subunit</fullName>
        <ecNumber evidence="1">3.1.11.6</ecNumber>
    </recommendedName>
    <alternativeName>
        <fullName evidence="1">Exodeoxyribonuclease VII large subunit</fullName>
        <shortName evidence="1">Exonuclease VII large subunit</shortName>
    </alternativeName>
</protein>
<sequence>MSDYLSVSALTKYIKYKFDQDPHLQSVLIKGELSNFKKHSSGHLYFNVKDKESVISAMMFKGSASKLNFEPKEGDEVLLEARVSVFERRGNYQIYVNKMQLDGIGNLYQKLEALKKKLTEEGCFDKANKKSIPKFPKKIAVLTASTGAAIRDIHSTINSRFPLAEQIQISTLVQGEKAKDDIIEKIEYADSLGVDTIIVGRGGGSIEDLWNFNEEAVVRAIYNCKTPIISAVGHETDFTLSDFAADIRAATPTQAAVIATPDQYELLQQIQQYQFTLTRFIKKHLEQQRKHVEHLSSYYKFKQPTLLYDQQIQRRDDLEKRLKQQIQATFEQQRHRLMLLQQRYNLKALLSSVNQEQQNNLQLTNQLVKLLNSKILSYKNDLKNKVENLNNLSPTNTMLRGYAIVNKKDEVITSTKDLTENDQLTLTMKDGLVDAKVTKVRCNND</sequence>
<keyword id="KW-0963">Cytoplasm</keyword>
<keyword id="KW-0269">Exonuclease</keyword>
<keyword id="KW-0378">Hydrolase</keyword>
<keyword id="KW-0540">Nuclease</keyword>
<accession>Q6G942</accession>